<name>RSMG_XANAC</name>
<organism>
    <name type="scientific">Xanthomonas axonopodis pv. citri (strain 306)</name>
    <dbReference type="NCBI Taxonomy" id="190486"/>
    <lineage>
        <taxon>Bacteria</taxon>
        <taxon>Pseudomonadati</taxon>
        <taxon>Pseudomonadota</taxon>
        <taxon>Gammaproteobacteria</taxon>
        <taxon>Lysobacterales</taxon>
        <taxon>Lysobacteraceae</taxon>
        <taxon>Xanthomonas</taxon>
    </lineage>
</organism>
<comment type="function">
    <text evidence="1">Specifically methylates the N7 position of guanine in position 527 of 16S rRNA.</text>
</comment>
<comment type="catalytic activity">
    <reaction evidence="1">
        <text>guanosine(527) in 16S rRNA + S-adenosyl-L-methionine = N(7)-methylguanosine(527) in 16S rRNA + S-adenosyl-L-homocysteine</text>
        <dbReference type="Rhea" id="RHEA:42732"/>
        <dbReference type="Rhea" id="RHEA-COMP:10209"/>
        <dbReference type="Rhea" id="RHEA-COMP:10210"/>
        <dbReference type="ChEBI" id="CHEBI:57856"/>
        <dbReference type="ChEBI" id="CHEBI:59789"/>
        <dbReference type="ChEBI" id="CHEBI:74269"/>
        <dbReference type="ChEBI" id="CHEBI:74480"/>
        <dbReference type="EC" id="2.1.1.170"/>
    </reaction>
</comment>
<comment type="subcellular location">
    <subcellularLocation>
        <location evidence="1">Cytoplasm</location>
    </subcellularLocation>
</comment>
<comment type="similarity">
    <text evidence="1">Belongs to the methyltransferase superfamily. RNA methyltransferase RsmG family.</text>
</comment>
<comment type="sequence caution" evidence="2">
    <conflict type="erroneous initiation">
        <sequence resource="EMBL-CDS" id="AAM39000"/>
    </conflict>
</comment>
<sequence length="212" mass="22588">MNDAALAPDVSAALERGLQAQSLDAAFAAPLLRYLALLVRWNKTYNLTAVRDPREMVTRHLLDSLAMQPYIASGALADLGTGPGLPGIPLAITRPQLQVTLVESNGKKARFMREALRHLELGNARVAESRAEALAEPAAYDHLTARALDTLAGIIAVGGHLLRPGGSLLAMKGVYPHEEIAALPAGWTVGEVHPLQVPGLEGERHLVVVRKG</sequence>
<proteinExistence type="inferred from homology"/>
<gene>
    <name evidence="1" type="primary">rsmG</name>
    <name type="ordered locus">XAC4165</name>
</gene>
<protein>
    <recommendedName>
        <fullName evidence="1">Ribosomal RNA small subunit methyltransferase G</fullName>
        <ecNumber evidence="1">2.1.1.170</ecNumber>
    </recommendedName>
    <alternativeName>
        <fullName evidence="1">16S rRNA 7-methylguanosine methyltransferase</fullName>
        <shortName evidence="1">16S rRNA m7G methyltransferase</shortName>
    </alternativeName>
</protein>
<feature type="chain" id="PRO_0000184368" description="Ribosomal RNA small subunit methyltransferase G">
    <location>
        <begin position="1"/>
        <end position="212"/>
    </location>
</feature>
<feature type="binding site" evidence="1">
    <location>
        <position position="80"/>
    </location>
    <ligand>
        <name>S-adenosyl-L-methionine</name>
        <dbReference type="ChEBI" id="CHEBI:59789"/>
    </ligand>
</feature>
<feature type="binding site" evidence="1">
    <location>
        <position position="85"/>
    </location>
    <ligand>
        <name>S-adenosyl-L-methionine</name>
        <dbReference type="ChEBI" id="CHEBI:59789"/>
    </ligand>
</feature>
<feature type="binding site" evidence="1">
    <location>
        <begin position="131"/>
        <end position="132"/>
    </location>
    <ligand>
        <name>S-adenosyl-L-methionine</name>
        <dbReference type="ChEBI" id="CHEBI:59789"/>
    </ligand>
</feature>
<feature type="binding site" evidence="1">
    <location>
        <position position="146"/>
    </location>
    <ligand>
        <name>S-adenosyl-L-methionine</name>
        <dbReference type="ChEBI" id="CHEBI:59789"/>
    </ligand>
</feature>
<accession>Q8PF23</accession>
<reference key="1">
    <citation type="journal article" date="2002" name="Nature">
        <title>Comparison of the genomes of two Xanthomonas pathogens with differing host specificities.</title>
        <authorList>
            <person name="da Silva A.C.R."/>
            <person name="Ferro J.A."/>
            <person name="Reinach F.C."/>
            <person name="Farah C.S."/>
            <person name="Furlan L.R."/>
            <person name="Quaggio R.B."/>
            <person name="Monteiro-Vitorello C.B."/>
            <person name="Van Sluys M.A."/>
            <person name="Almeida N.F. Jr."/>
            <person name="Alves L.M.C."/>
            <person name="do Amaral A.M."/>
            <person name="Bertolini M.C."/>
            <person name="Camargo L.E.A."/>
            <person name="Camarotte G."/>
            <person name="Cannavan F."/>
            <person name="Cardozo J."/>
            <person name="Chambergo F."/>
            <person name="Ciapina L.P."/>
            <person name="Cicarelli R.M.B."/>
            <person name="Coutinho L.L."/>
            <person name="Cursino-Santos J.R."/>
            <person name="El-Dorry H."/>
            <person name="Faria J.B."/>
            <person name="Ferreira A.J.S."/>
            <person name="Ferreira R.C.C."/>
            <person name="Ferro M.I.T."/>
            <person name="Formighieri E.F."/>
            <person name="Franco M.C."/>
            <person name="Greggio C.C."/>
            <person name="Gruber A."/>
            <person name="Katsuyama A.M."/>
            <person name="Kishi L.T."/>
            <person name="Leite R.P."/>
            <person name="Lemos E.G.M."/>
            <person name="Lemos M.V.F."/>
            <person name="Locali E.C."/>
            <person name="Machado M.A."/>
            <person name="Madeira A.M.B.N."/>
            <person name="Martinez-Rossi N.M."/>
            <person name="Martins E.C."/>
            <person name="Meidanis J."/>
            <person name="Menck C.F.M."/>
            <person name="Miyaki C.Y."/>
            <person name="Moon D.H."/>
            <person name="Moreira L.M."/>
            <person name="Novo M.T.M."/>
            <person name="Okura V.K."/>
            <person name="Oliveira M.C."/>
            <person name="Oliveira V.R."/>
            <person name="Pereira H.A."/>
            <person name="Rossi A."/>
            <person name="Sena J.A.D."/>
            <person name="Silva C."/>
            <person name="de Souza R.F."/>
            <person name="Spinola L.A.F."/>
            <person name="Takita M.A."/>
            <person name="Tamura R.E."/>
            <person name="Teixeira E.C."/>
            <person name="Tezza R.I.D."/>
            <person name="Trindade dos Santos M."/>
            <person name="Truffi D."/>
            <person name="Tsai S.M."/>
            <person name="White F.F."/>
            <person name="Setubal J.C."/>
            <person name="Kitajima J.P."/>
        </authorList>
    </citation>
    <scope>NUCLEOTIDE SEQUENCE [LARGE SCALE GENOMIC DNA]</scope>
    <source>
        <strain>306</strain>
    </source>
</reference>
<evidence type="ECO:0000255" key="1">
    <source>
        <dbReference type="HAMAP-Rule" id="MF_00074"/>
    </source>
</evidence>
<evidence type="ECO:0000305" key="2"/>
<keyword id="KW-0963">Cytoplasm</keyword>
<keyword id="KW-0489">Methyltransferase</keyword>
<keyword id="KW-0698">rRNA processing</keyword>
<keyword id="KW-0949">S-adenosyl-L-methionine</keyword>
<keyword id="KW-0808">Transferase</keyword>
<dbReference type="EC" id="2.1.1.170" evidence="1"/>
<dbReference type="EMBL" id="AE008923">
    <property type="protein sequence ID" value="AAM39000.1"/>
    <property type="status" value="ALT_INIT"/>
    <property type="molecule type" value="Genomic_DNA"/>
</dbReference>
<dbReference type="RefSeq" id="WP_003487708.1">
    <property type="nucleotide sequence ID" value="NC_003919.1"/>
</dbReference>
<dbReference type="SMR" id="Q8PF23"/>
<dbReference type="GeneID" id="66913149"/>
<dbReference type="KEGG" id="xac:XAC4165"/>
<dbReference type="eggNOG" id="COG0357">
    <property type="taxonomic scope" value="Bacteria"/>
</dbReference>
<dbReference type="HOGENOM" id="CLU_065341_2_0_6"/>
<dbReference type="Proteomes" id="UP000000576">
    <property type="component" value="Chromosome"/>
</dbReference>
<dbReference type="GO" id="GO:0005829">
    <property type="term" value="C:cytosol"/>
    <property type="evidence" value="ECO:0007669"/>
    <property type="project" value="TreeGrafter"/>
</dbReference>
<dbReference type="GO" id="GO:0070043">
    <property type="term" value="F:rRNA (guanine-N7-)-methyltransferase activity"/>
    <property type="evidence" value="ECO:0007669"/>
    <property type="project" value="UniProtKB-UniRule"/>
</dbReference>
<dbReference type="CDD" id="cd02440">
    <property type="entry name" value="AdoMet_MTases"/>
    <property type="match status" value="1"/>
</dbReference>
<dbReference type="Gene3D" id="3.40.50.150">
    <property type="entry name" value="Vaccinia Virus protein VP39"/>
    <property type="match status" value="1"/>
</dbReference>
<dbReference type="HAMAP" id="MF_00074">
    <property type="entry name" value="16SrRNA_methyltr_G"/>
    <property type="match status" value="1"/>
</dbReference>
<dbReference type="InterPro" id="IPR003682">
    <property type="entry name" value="rRNA_ssu_MeTfrase_G"/>
</dbReference>
<dbReference type="InterPro" id="IPR029063">
    <property type="entry name" value="SAM-dependent_MTases_sf"/>
</dbReference>
<dbReference type="NCBIfam" id="TIGR00138">
    <property type="entry name" value="rsmG_gidB"/>
    <property type="match status" value="1"/>
</dbReference>
<dbReference type="PANTHER" id="PTHR31760">
    <property type="entry name" value="S-ADENOSYL-L-METHIONINE-DEPENDENT METHYLTRANSFERASES SUPERFAMILY PROTEIN"/>
    <property type="match status" value="1"/>
</dbReference>
<dbReference type="PANTHER" id="PTHR31760:SF0">
    <property type="entry name" value="S-ADENOSYL-L-METHIONINE-DEPENDENT METHYLTRANSFERASES SUPERFAMILY PROTEIN"/>
    <property type="match status" value="1"/>
</dbReference>
<dbReference type="Pfam" id="PF02527">
    <property type="entry name" value="GidB"/>
    <property type="match status" value="1"/>
</dbReference>
<dbReference type="PIRSF" id="PIRSF003078">
    <property type="entry name" value="GidB"/>
    <property type="match status" value="1"/>
</dbReference>
<dbReference type="SUPFAM" id="SSF53335">
    <property type="entry name" value="S-adenosyl-L-methionine-dependent methyltransferases"/>
    <property type="match status" value="1"/>
</dbReference>